<feature type="chain" id="PRO_1000055496" description="Large ribosomal subunit protein uL14">
    <location>
        <begin position="1"/>
        <end position="122"/>
    </location>
</feature>
<protein>
    <recommendedName>
        <fullName evidence="1">Large ribosomal subunit protein uL14</fullName>
    </recommendedName>
    <alternativeName>
        <fullName evidence="2">50S ribosomal protein L14</fullName>
    </alternativeName>
</protein>
<name>RL14_ACIBT</name>
<keyword id="KW-0687">Ribonucleoprotein</keyword>
<keyword id="KW-0689">Ribosomal protein</keyword>
<keyword id="KW-0694">RNA-binding</keyword>
<keyword id="KW-0699">rRNA-binding</keyword>
<organism>
    <name type="scientific">Acinetobacter baumannii (strain ATCC 17978 / DSM 105126 / CIP 53.77 / LMG 1025 / NCDC KC755 / 5377)</name>
    <dbReference type="NCBI Taxonomy" id="400667"/>
    <lineage>
        <taxon>Bacteria</taxon>
        <taxon>Pseudomonadati</taxon>
        <taxon>Pseudomonadota</taxon>
        <taxon>Gammaproteobacteria</taxon>
        <taxon>Moraxellales</taxon>
        <taxon>Moraxellaceae</taxon>
        <taxon>Acinetobacter</taxon>
        <taxon>Acinetobacter calcoaceticus/baumannii complex</taxon>
    </lineage>
</organism>
<gene>
    <name evidence="1" type="primary">rplN</name>
    <name type="ordered locus">A1S_3071</name>
</gene>
<comment type="function">
    <text evidence="1">Binds to 23S rRNA. Forms part of two intersubunit bridges in the 70S ribosome.</text>
</comment>
<comment type="subunit">
    <text evidence="1">Part of the 50S ribosomal subunit. Forms a cluster with proteins L3 and L19. In the 70S ribosome, L14 and L19 interact and together make contacts with the 16S rRNA in bridges B5 and B8.</text>
</comment>
<comment type="similarity">
    <text evidence="1">Belongs to the universal ribosomal protein uL14 family.</text>
</comment>
<dbReference type="EMBL" id="CP000521">
    <property type="protein sequence ID" value="ABO13468.1"/>
    <property type="molecule type" value="Genomic_DNA"/>
</dbReference>
<dbReference type="RefSeq" id="WP_001982634.1">
    <property type="nucleotide sequence ID" value="NZ_CP053098.1"/>
</dbReference>
<dbReference type="SMR" id="A3M974"/>
<dbReference type="GeneID" id="97425209"/>
<dbReference type="KEGG" id="acb:A1S_3071"/>
<dbReference type="HOGENOM" id="CLU_095071_2_1_6"/>
<dbReference type="GO" id="GO:0022625">
    <property type="term" value="C:cytosolic large ribosomal subunit"/>
    <property type="evidence" value="ECO:0007669"/>
    <property type="project" value="TreeGrafter"/>
</dbReference>
<dbReference type="GO" id="GO:0070180">
    <property type="term" value="F:large ribosomal subunit rRNA binding"/>
    <property type="evidence" value="ECO:0007669"/>
    <property type="project" value="TreeGrafter"/>
</dbReference>
<dbReference type="GO" id="GO:0003735">
    <property type="term" value="F:structural constituent of ribosome"/>
    <property type="evidence" value="ECO:0007669"/>
    <property type="project" value="InterPro"/>
</dbReference>
<dbReference type="GO" id="GO:0006412">
    <property type="term" value="P:translation"/>
    <property type="evidence" value="ECO:0007669"/>
    <property type="project" value="UniProtKB-UniRule"/>
</dbReference>
<dbReference type="CDD" id="cd00337">
    <property type="entry name" value="Ribosomal_uL14"/>
    <property type="match status" value="1"/>
</dbReference>
<dbReference type="FunFam" id="2.40.150.20:FF:000001">
    <property type="entry name" value="50S ribosomal protein L14"/>
    <property type="match status" value="1"/>
</dbReference>
<dbReference type="Gene3D" id="2.40.150.20">
    <property type="entry name" value="Ribosomal protein L14"/>
    <property type="match status" value="1"/>
</dbReference>
<dbReference type="HAMAP" id="MF_01367">
    <property type="entry name" value="Ribosomal_uL14"/>
    <property type="match status" value="1"/>
</dbReference>
<dbReference type="InterPro" id="IPR000218">
    <property type="entry name" value="Ribosomal_uL14"/>
</dbReference>
<dbReference type="InterPro" id="IPR005745">
    <property type="entry name" value="Ribosomal_uL14_bac-type"/>
</dbReference>
<dbReference type="InterPro" id="IPR019972">
    <property type="entry name" value="Ribosomal_uL14_CS"/>
</dbReference>
<dbReference type="InterPro" id="IPR036853">
    <property type="entry name" value="Ribosomal_uL14_sf"/>
</dbReference>
<dbReference type="NCBIfam" id="TIGR01067">
    <property type="entry name" value="rplN_bact"/>
    <property type="match status" value="1"/>
</dbReference>
<dbReference type="PANTHER" id="PTHR11761">
    <property type="entry name" value="50S/60S RIBOSOMAL PROTEIN L14/L23"/>
    <property type="match status" value="1"/>
</dbReference>
<dbReference type="PANTHER" id="PTHR11761:SF3">
    <property type="entry name" value="LARGE RIBOSOMAL SUBUNIT PROTEIN UL14M"/>
    <property type="match status" value="1"/>
</dbReference>
<dbReference type="Pfam" id="PF00238">
    <property type="entry name" value="Ribosomal_L14"/>
    <property type="match status" value="1"/>
</dbReference>
<dbReference type="SMART" id="SM01374">
    <property type="entry name" value="Ribosomal_L14"/>
    <property type="match status" value="1"/>
</dbReference>
<dbReference type="SUPFAM" id="SSF50193">
    <property type="entry name" value="Ribosomal protein L14"/>
    <property type="match status" value="1"/>
</dbReference>
<dbReference type="PROSITE" id="PS00049">
    <property type="entry name" value="RIBOSOMAL_L14"/>
    <property type="match status" value="1"/>
</dbReference>
<evidence type="ECO:0000255" key="1">
    <source>
        <dbReference type="HAMAP-Rule" id="MF_01367"/>
    </source>
</evidence>
<evidence type="ECO:0000305" key="2"/>
<sequence>MIQTETMLDVADNSGARRVQCIKVLGGSHRRYASVGDIIKVTVKEAIPRARVKKGDVMNAVVVRTKFGIRRPDGSVIRFDDNAAVILNNNKAPIATRIFGPVTRELRTEQFMKIISLAPEVL</sequence>
<proteinExistence type="inferred from homology"/>
<reference key="1">
    <citation type="journal article" date="2007" name="Genes Dev.">
        <title>New insights into Acinetobacter baumannii pathogenesis revealed by high-density pyrosequencing and transposon mutagenesis.</title>
        <authorList>
            <person name="Smith M.G."/>
            <person name="Gianoulis T.A."/>
            <person name="Pukatzki S."/>
            <person name="Mekalanos J.J."/>
            <person name="Ornston L.N."/>
            <person name="Gerstein M."/>
            <person name="Snyder M."/>
        </authorList>
    </citation>
    <scope>NUCLEOTIDE SEQUENCE [LARGE SCALE GENOMIC DNA]</scope>
    <source>
        <strain>ATCC 17978 / DSM 105126 / CIP 53.77 / LMG 1025 / NCDC KC755 / 5377</strain>
    </source>
</reference>
<accession>A3M974</accession>